<proteinExistence type="inferred from homology"/>
<comment type="function">
    <text evidence="1">Probable spore cortex-lytic enzyme involved in the depolymerization of cortex peptidoglycan during germination.</text>
</comment>
<comment type="subcellular location">
    <subcellularLocation>
        <location evidence="2">Secreted</location>
    </subcellularLocation>
</comment>
<comment type="similarity">
    <text evidence="2">Belongs to the CwlJ family.</text>
</comment>
<reference key="1">
    <citation type="journal article" date="2000" name="Nucleic Acids Res.">
        <title>Complete genome sequence of the alkaliphilic bacterium Bacillus halodurans and genomic sequence comparison with Bacillus subtilis.</title>
        <authorList>
            <person name="Takami H."/>
            <person name="Nakasone K."/>
            <person name="Takaki Y."/>
            <person name="Maeno G."/>
            <person name="Sasaki R."/>
            <person name="Masui N."/>
            <person name="Fuji F."/>
            <person name="Hirama C."/>
            <person name="Nakamura Y."/>
            <person name="Ogasawara N."/>
            <person name="Kuhara S."/>
            <person name="Horikoshi K."/>
        </authorList>
    </citation>
    <scope>NUCLEOTIDE SEQUENCE [LARGE SCALE GENOMIC DNA]</scope>
    <source>
        <strain>ATCC BAA-125 / DSM 18197 / FERM 7344 / JCM 9153 / C-125</strain>
    </source>
</reference>
<dbReference type="EMBL" id="BA000004">
    <property type="protein sequence ID" value="BAB07545.1"/>
    <property type="molecule type" value="Genomic_DNA"/>
</dbReference>
<dbReference type="PIR" id="B84128">
    <property type="entry name" value="B84128"/>
</dbReference>
<dbReference type="RefSeq" id="WP_010899951.1">
    <property type="nucleotide sequence ID" value="NC_002570.2"/>
</dbReference>
<dbReference type="SMR" id="Q9K6A3"/>
<dbReference type="STRING" id="272558.gene:10729739"/>
<dbReference type="GeneID" id="87599372"/>
<dbReference type="KEGG" id="bha:BH3826"/>
<dbReference type="eggNOG" id="COG3773">
    <property type="taxonomic scope" value="Bacteria"/>
</dbReference>
<dbReference type="HOGENOM" id="CLU_148732_0_0_9"/>
<dbReference type="Proteomes" id="UP000001258">
    <property type="component" value="Chromosome"/>
</dbReference>
<dbReference type="GO" id="GO:0005576">
    <property type="term" value="C:extracellular region"/>
    <property type="evidence" value="ECO:0007669"/>
    <property type="project" value="UniProtKB-SubCell"/>
</dbReference>
<dbReference type="GO" id="GO:0016787">
    <property type="term" value="F:hydrolase activity"/>
    <property type="evidence" value="ECO:0007669"/>
    <property type="project" value="UniProtKB-KW"/>
</dbReference>
<dbReference type="GO" id="GO:0071555">
    <property type="term" value="P:cell wall organization"/>
    <property type="evidence" value="ECO:0007669"/>
    <property type="project" value="UniProtKB-KW"/>
</dbReference>
<dbReference type="GO" id="GO:0030435">
    <property type="term" value="P:sporulation resulting in formation of a cellular spore"/>
    <property type="evidence" value="ECO:0007669"/>
    <property type="project" value="UniProtKB-KW"/>
</dbReference>
<dbReference type="Gene3D" id="1.10.10.2520">
    <property type="entry name" value="Cell wall hydrolase SleB, domain 1"/>
    <property type="match status" value="1"/>
</dbReference>
<dbReference type="InterPro" id="IPR011105">
    <property type="entry name" value="Cell_wall_hydrolase_SleB"/>
</dbReference>
<dbReference type="InterPro" id="IPR042047">
    <property type="entry name" value="SleB_dom1"/>
</dbReference>
<dbReference type="Pfam" id="PF07486">
    <property type="entry name" value="Hydrolase_2"/>
    <property type="match status" value="1"/>
</dbReference>
<protein>
    <recommendedName>
        <fullName>Cell wall hydrolase CwlJ</fullName>
    </recommendedName>
</protein>
<sequence>MAVIRTTSRDIDLLARLMRAEAEGEGDLGMLMAGNVMVNRVRVGCLDFADINTVERMVFQSPGGFEATQKGYFYQRAREKERRLAQRIVNGERTHPAEFSLWFFRPDGPCPEQWYGQWNSGRYKAHCFFNPTSADCPEVYGVF</sequence>
<gene>
    <name type="primary">cwlJ</name>
    <name type="ordered locus">BH3826</name>
</gene>
<name>CWLJ_HALH5</name>
<accession>Q9K6A3</accession>
<organism>
    <name type="scientific">Halalkalibacterium halodurans (strain ATCC BAA-125 / DSM 18197 / FERM 7344 / JCM 9153 / C-125)</name>
    <name type="common">Bacillus halodurans</name>
    <dbReference type="NCBI Taxonomy" id="272558"/>
    <lineage>
        <taxon>Bacteria</taxon>
        <taxon>Bacillati</taxon>
        <taxon>Bacillota</taxon>
        <taxon>Bacilli</taxon>
        <taxon>Bacillales</taxon>
        <taxon>Bacillaceae</taxon>
        <taxon>Halalkalibacterium (ex Joshi et al. 2022)</taxon>
    </lineage>
</organism>
<feature type="chain" id="PRO_0000164425" description="Cell wall hydrolase CwlJ">
    <location>
        <begin position="1"/>
        <end position="143"/>
    </location>
</feature>
<evidence type="ECO:0000250" key="1"/>
<evidence type="ECO:0000305" key="2"/>
<keyword id="KW-0961">Cell wall biogenesis/degradation</keyword>
<keyword id="KW-0309">Germination</keyword>
<keyword id="KW-0378">Hydrolase</keyword>
<keyword id="KW-1185">Reference proteome</keyword>
<keyword id="KW-0964">Secreted</keyword>
<keyword id="KW-0749">Sporulation</keyword>